<feature type="chain" id="PRO_0000313209" description="DNA ligase">
    <location>
        <begin position="1"/>
        <end position="673"/>
    </location>
</feature>
<feature type="domain" description="BRCT" evidence="1">
    <location>
        <begin position="595"/>
        <end position="673"/>
    </location>
</feature>
<feature type="active site" description="N6-AMP-lysine intermediate" evidence="1">
    <location>
        <position position="121"/>
    </location>
</feature>
<feature type="binding site" evidence="1">
    <location>
        <begin position="38"/>
        <end position="42"/>
    </location>
    <ligand>
        <name>NAD(+)</name>
        <dbReference type="ChEBI" id="CHEBI:57540"/>
    </ligand>
</feature>
<feature type="binding site" evidence="1">
    <location>
        <begin position="87"/>
        <end position="88"/>
    </location>
    <ligand>
        <name>NAD(+)</name>
        <dbReference type="ChEBI" id="CHEBI:57540"/>
    </ligand>
</feature>
<feature type="binding site" evidence="1">
    <location>
        <position position="119"/>
    </location>
    <ligand>
        <name>NAD(+)</name>
        <dbReference type="ChEBI" id="CHEBI:57540"/>
    </ligand>
</feature>
<feature type="binding site" evidence="1">
    <location>
        <position position="142"/>
    </location>
    <ligand>
        <name>NAD(+)</name>
        <dbReference type="ChEBI" id="CHEBI:57540"/>
    </ligand>
</feature>
<feature type="binding site" evidence="1">
    <location>
        <position position="179"/>
    </location>
    <ligand>
        <name>NAD(+)</name>
        <dbReference type="ChEBI" id="CHEBI:57540"/>
    </ligand>
</feature>
<feature type="binding site" evidence="1">
    <location>
        <position position="296"/>
    </location>
    <ligand>
        <name>NAD(+)</name>
        <dbReference type="ChEBI" id="CHEBI:57540"/>
    </ligand>
</feature>
<feature type="binding site" evidence="1">
    <location>
        <position position="320"/>
    </location>
    <ligand>
        <name>NAD(+)</name>
        <dbReference type="ChEBI" id="CHEBI:57540"/>
    </ligand>
</feature>
<feature type="binding site" evidence="1">
    <location>
        <position position="414"/>
    </location>
    <ligand>
        <name>Zn(2+)</name>
        <dbReference type="ChEBI" id="CHEBI:29105"/>
    </ligand>
</feature>
<feature type="binding site" evidence="1">
    <location>
        <position position="417"/>
    </location>
    <ligand>
        <name>Zn(2+)</name>
        <dbReference type="ChEBI" id="CHEBI:29105"/>
    </ligand>
</feature>
<feature type="binding site" evidence="1">
    <location>
        <position position="432"/>
    </location>
    <ligand>
        <name>Zn(2+)</name>
        <dbReference type="ChEBI" id="CHEBI:29105"/>
    </ligand>
</feature>
<feature type="binding site" evidence="1">
    <location>
        <position position="438"/>
    </location>
    <ligand>
        <name>Zn(2+)</name>
        <dbReference type="ChEBI" id="CHEBI:29105"/>
    </ligand>
</feature>
<name>DNLJ_COXBU</name>
<comment type="function">
    <text evidence="1">DNA ligase that catalyzes the formation of phosphodiester linkages between 5'-phosphoryl and 3'-hydroxyl groups in double-stranded DNA using NAD as a coenzyme and as the energy source for the reaction. It is essential for DNA replication and repair of damaged DNA.</text>
</comment>
<comment type="catalytic activity">
    <reaction evidence="1">
        <text>NAD(+) + (deoxyribonucleotide)n-3'-hydroxyl + 5'-phospho-(deoxyribonucleotide)m = (deoxyribonucleotide)n+m + AMP + beta-nicotinamide D-nucleotide.</text>
        <dbReference type="EC" id="6.5.1.2"/>
    </reaction>
</comment>
<comment type="cofactor">
    <cofactor evidence="1">
        <name>Mg(2+)</name>
        <dbReference type="ChEBI" id="CHEBI:18420"/>
    </cofactor>
    <cofactor evidence="1">
        <name>Mn(2+)</name>
        <dbReference type="ChEBI" id="CHEBI:29035"/>
    </cofactor>
</comment>
<comment type="similarity">
    <text evidence="1">Belongs to the NAD-dependent DNA ligase family. LigA subfamily.</text>
</comment>
<organism>
    <name type="scientific">Coxiella burnetii (strain RSA 493 / Nine Mile phase I)</name>
    <dbReference type="NCBI Taxonomy" id="227377"/>
    <lineage>
        <taxon>Bacteria</taxon>
        <taxon>Pseudomonadati</taxon>
        <taxon>Pseudomonadota</taxon>
        <taxon>Gammaproteobacteria</taxon>
        <taxon>Legionellales</taxon>
        <taxon>Coxiellaceae</taxon>
        <taxon>Coxiella</taxon>
    </lineage>
</organism>
<accession>Q83DZ6</accession>
<reference key="1">
    <citation type="journal article" date="2003" name="Proc. Natl. Acad. Sci. U.S.A.">
        <title>Complete genome sequence of the Q-fever pathogen, Coxiella burnetii.</title>
        <authorList>
            <person name="Seshadri R."/>
            <person name="Paulsen I.T."/>
            <person name="Eisen J.A."/>
            <person name="Read T.D."/>
            <person name="Nelson K.E."/>
            <person name="Nelson W.C."/>
            <person name="Ward N.L."/>
            <person name="Tettelin H."/>
            <person name="Davidsen T.M."/>
            <person name="Beanan M.J."/>
            <person name="DeBoy R.T."/>
            <person name="Daugherty S.C."/>
            <person name="Brinkac L.M."/>
            <person name="Madupu R."/>
            <person name="Dodson R.J."/>
            <person name="Khouri H.M."/>
            <person name="Lee K.H."/>
            <person name="Carty H.A."/>
            <person name="Scanlan D."/>
            <person name="Heinzen R.A."/>
            <person name="Thompson H.A."/>
            <person name="Samuel J.E."/>
            <person name="Fraser C.M."/>
            <person name="Heidelberg J.F."/>
        </authorList>
    </citation>
    <scope>NUCLEOTIDE SEQUENCE [LARGE SCALE GENOMIC DNA]</scope>
    <source>
        <strain>RSA 493 / Nine Mile phase I</strain>
    </source>
</reference>
<evidence type="ECO:0000255" key="1">
    <source>
        <dbReference type="HAMAP-Rule" id="MF_01588"/>
    </source>
</evidence>
<keyword id="KW-0227">DNA damage</keyword>
<keyword id="KW-0234">DNA repair</keyword>
<keyword id="KW-0235">DNA replication</keyword>
<keyword id="KW-0436">Ligase</keyword>
<keyword id="KW-0460">Magnesium</keyword>
<keyword id="KW-0464">Manganese</keyword>
<keyword id="KW-0479">Metal-binding</keyword>
<keyword id="KW-0520">NAD</keyword>
<keyword id="KW-1185">Reference proteome</keyword>
<keyword id="KW-0862">Zinc</keyword>
<protein>
    <recommendedName>
        <fullName evidence="1">DNA ligase</fullName>
        <ecNumber evidence="1">6.5.1.2</ecNumber>
    </recommendedName>
    <alternativeName>
        <fullName evidence="1">Polydeoxyribonucleotide synthase [NAD(+)]</fullName>
    </alternativeName>
</protein>
<dbReference type="EC" id="6.5.1.2" evidence="1"/>
<dbReference type="EMBL" id="AE016828">
    <property type="protein sequence ID" value="AAO90088.2"/>
    <property type="molecule type" value="Genomic_DNA"/>
</dbReference>
<dbReference type="RefSeq" id="NP_819574.2">
    <property type="nucleotide sequence ID" value="NC_002971.4"/>
</dbReference>
<dbReference type="RefSeq" id="WP_010957648.1">
    <property type="nucleotide sequence ID" value="NC_002971.4"/>
</dbReference>
<dbReference type="SMR" id="Q83DZ6"/>
<dbReference type="STRING" id="227377.CBU_0542"/>
<dbReference type="DNASU" id="1208427"/>
<dbReference type="EnsemblBacteria" id="AAO90088">
    <property type="protein sequence ID" value="AAO90088"/>
    <property type="gene ID" value="CBU_0542"/>
</dbReference>
<dbReference type="GeneID" id="1208427"/>
<dbReference type="KEGG" id="cbu:CBU_0542"/>
<dbReference type="PATRIC" id="fig|227377.7.peg.535"/>
<dbReference type="eggNOG" id="COG0272">
    <property type="taxonomic scope" value="Bacteria"/>
</dbReference>
<dbReference type="HOGENOM" id="CLU_007764_2_1_6"/>
<dbReference type="OrthoDB" id="9759736at2"/>
<dbReference type="Proteomes" id="UP000002671">
    <property type="component" value="Chromosome"/>
</dbReference>
<dbReference type="GO" id="GO:0005829">
    <property type="term" value="C:cytosol"/>
    <property type="evidence" value="ECO:0000318"/>
    <property type="project" value="GO_Central"/>
</dbReference>
<dbReference type="GO" id="GO:0003677">
    <property type="term" value="F:DNA binding"/>
    <property type="evidence" value="ECO:0007669"/>
    <property type="project" value="InterPro"/>
</dbReference>
<dbReference type="GO" id="GO:0003911">
    <property type="term" value="F:DNA ligase (NAD+) activity"/>
    <property type="evidence" value="ECO:0000318"/>
    <property type="project" value="GO_Central"/>
</dbReference>
<dbReference type="GO" id="GO:0046872">
    <property type="term" value="F:metal ion binding"/>
    <property type="evidence" value="ECO:0007669"/>
    <property type="project" value="UniProtKB-KW"/>
</dbReference>
<dbReference type="GO" id="GO:0006281">
    <property type="term" value="P:DNA repair"/>
    <property type="evidence" value="ECO:0007669"/>
    <property type="project" value="UniProtKB-KW"/>
</dbReference>
<dbReference type="GO" id="GO:0006260">
    <property type="term" value="P:DNA replication"/>
    <property type="evidence" value="ECO:0007669"/>
    <property type="project" value="UniProtKB-KW"/>
</dbReference>
<dbReference type="CDD" id="cd17748">
    <property type="entry name" value="BRCT_DNA_ligase_like"/>
    <property type="match status" value="1"/>
</dbReference>
<dbReference type="CDD" id="cd00114">
    <property type="entry name" value="LIGANc"/>
    <property type="match status" value="1"/>
</dbReference>
<dbReference type="FunFam" id="1.10.150.20:FF:000006">
    <property type="entry name" value="DNA ligase"/>
    <property type="match status" value="1"/>
</dbReference>
<dbReference type="FunFam" id="1.10.150.20:FF:000007">
    <property type="entry name" value="DNA ligase"/>
    <property type="match status" value="1"/>
</dbReference>
<dbReference type="FunFam" id="1.10.287.610:FF:000002">
    <property type="entry name" value="DNA ligase"/>
    <property type="match status" value="1"/>
</dbReference>
<dbReference type="FunFam" id="2.40.50.140:FF:000012">
    <property type="entry name" value="DNA ligase"/>
    <property type="match status" value="1"/>
</dbReference>
<dbReference type="FunFam" id="3.30.470.30:FF:000001">
    <property type="entry name" value="DNA ligase"/>
    <property type="match status" value="1"/>
</dbReference>
<dbReference type="FunFam" id="3.40.50.10190:FF:000086">
    <property type="entry name" value="DNA ligase"/>
    <property type="match status" value="1"/>
</dbReference>
<dbReference type="Gene3D" id="6.20.10.30">
    <property type="match status" value="1"/>
</dbReference>
<dbReference type="Gene3D" id="1.10.150.20">
    <property type="entry name" value="5' to 3' exonuclease, C-terminal subdomain"/>
    <property type="match status" value="2"/>
</dbReference>
<dbReference type="Gene3D" id="3.40.50.10190">
    <property type="entry name" value="BRCT domain"/>
    <property type="match status" value="1"/>
</dbReference>
<dbReference type="Gene3D" id="3.30.470.30">
    <property type="entry name" value="DNA ligase/mRNA capping enzyme"/>
    <property type="match status" value="1"/>
</dbReference>
<dbReference type="Gene3D" id="1.10.287.610">
    <property type="entry name" value="Helix hairpin bin"/>
    <property type="match status" value="1"/>
</dbReference>
<dbReference type="Gene3D" id="2.40.50.140">
    <property type="entry name" value="Nucleic acid-binding proteins"/>
    <property type="match status" value="1"/>
</dbReference>
<dbReference type="HAMAP" id="MF_01588">
    <property type="entry name" value="DNA_ligase_A"/>
    <property type="match status" value="1"/>
</dbReference>
<dbReference type="InterPro" id="IPR001357">
    <property type="entry name" value="BRCT_dom"/>
</dbReference>
<dbReference type="InterPro" id="IPR036420">
    <property type="entry name" value="BRCT_dom_sf"/>
</dbReference>
<dbReference type="InterPro" id="IPR041663">
    <property type="entry name" value="DisA/LigA_HHH"/>
</dbReference>
<dbReference type="InterPro" id="IPR001679">
    <property type="entry name" value="DNA_ligase"/>
</dbReference>
<dbReference type="InterPro" id="IPR018239">
    <property type="entry name" value="DNA_ligase_AS"/>
</dbReference>
<dbReference type="InterPro" id="IPR033136">
    <property type="entry name" value="DNA_ligase_CS"/>
</dbReference>
<dbReference type="InterPro" id="IPR013839">
    <property type="entry name" value="DNAligase_adenylation"/>
</dbReference>
<dbReference type="InterPro" id="IPR013840">
    <property type="entry name" value="DNAligase_N"/>
</dbReference>
<dbReference type="InterPro" id="IPR003583">
    <property type="entry name" value="Hlx-hairpin-Hlx_DNA-bd_motif"/>
</dbReference>
<dbReference type="InterPro" id="IPR012340">
    <property type="entry name" value="NA-bd_OB-fold"/>
</dbReference>
<dbReference type="InterPro" id="IPR004150">
    <property type="entry name" value="NAD_DNA_ligase_OB"/>
</dbReference>
<dbReference type="InterPro" id="IPR010994">
    <property type="entry name" value="RuvA_2-like"/>
</dbReference>
<dbReference type="InterPro" id="IPR004149">
    <property type="entry name" value="Znf_DNAligase_C4"/>
</dbReference>
<dbReference type="NCBIfam" id="TIGR00575">
    <property type="entry name" value="dnlj"/>
    <property type="match status" value="1"/>
</dbReference>
<dbReference type="NCBIfam" id="NF005932">
    <property type="entry name" value="PRK07956.1"/>
    <property type="match status" value="1"/>
</dbReference>
<dbReference type="PANTHER" id="PTHR23389">
    <property type="entry name" value="CHROMOSOME TRANSMISSION FIDELITY FACTOR 18"/>
    <property type="match status" value="1"/>
</dbReference>
<dbReference type="PANTHER" id="PTHR23389:SF9">
    <property type="entry name" value="DNA LIGASE"/>
    <property type="match status" value="1"/>
</dbReference>
<dbReference type="Pfam" id="PF00533">
    <property type="entry name" value="BRCT"/>
    <property type="match status" value="1"/>
</dbReference>
<dbReference type="Pfam" id="PF01653">
    <property type="entry name" value="DNA_ligase_aden"/>
    <property type="match status" value="1"/>
</dbReference>
<dbReference type="Pfam" id="PF03120">
    <property type="entry name" value="DNA_ligase_OB"/>
    <property type="match status" value="1"/>
</dbReference>
<dbReference type="Pfam" id="PF03119">
    <property type="entry name" value="DNA_ligase_ZBD"/>
    <property type="match status" value="1"/>
</dbReference>
<dbReference type="Pfam" id="PF12826">
    <property type="entry name" value="HHH_2"/>
    <property type="match status" value="1"/>
</dbReference>
<dbReference type="Pfam" id="PF14520">
    <property type="entry name" value="HHH_5"/>
    <property type="match status" value="1"/>
</dbReference>
<dbReference type="Pfam" id="PF22745">
    <property type="entry name" value="Nlig-Ia"/>
    <property type="match status" value="1"/>
</dbReference>
<dbReference type="PIRSF" id="PIRSF001604">
    <property type="entry name" value="LigA"/>
    <property type="match status" value="1"/>
</dbReference>
<dbReference type="SMART" id="SM00292">
    <property type="entry name" value="BRCT"/>
    <property type="match status" value="1"/>
</dbReference>
<dbReference type="SMART" id="SM00278">
    <property type="entry name" value="HhH1"/>
    <property type="match status" value="4"/>
</dbReference>
<dbReference type="SMART" id="SM00532">
    <property type="entry name" value="LIGANc"/>
    <property type="match status" value="1"/>
</dbReference>
<dbReference type="SUPFAM" id="SSF52113">
    <property type="entry name" value="BRCT domain"/>
    <property type="match status" value="1"/>
</dbReference>
<dbReference type="SUPFAM" id="SSF56091">
    <property type="entry name" value="DNA ligase/mRNA capping enzyme, catalytic domain"/>
    <property type="match status" value="1"/>
</dbReference>
<dbReference type="SUPFAM" id="SSF50249">
    <property type="entry name" value="Nucleic acid-binding proteins"/>
    <property type="match status" value="1"/>
</dbReference>
<dbReference type="SUPFAM" id="SSF47781">
    <property type="entry name" value="RuvA domain 2-like"/>
    <property type="match status" value="1"/>
</dbReference>
<dbReference type="PROSITE" id="PS50172">
    <property type="entry name" value="BRCT"/>
    <property type="match status" value="1"/>
</dbReference>
<dbReference type="PROSITE" id="PS01055">
    <property type="entry name" value="DNA_LIGASE_N1"/>
    <property type="match status" value="1"/>
</dbReference>
<dbReference type="PROSITE" id="PS01056">
    <property type="entry name" value="DNA_LIGASE_N2"/>
    <property type="match status" value="1"/>
</dbReference>
<gene>
    <name evidence="1" type="primary">ligA</name>
    <name type="ordered locus">CBU_0542</name>
</gene>
<proteinExistence type="inferred from homology"/>
<sequence length="673" mass="75546">MNGVEVPAKIQKRIERLRQEINDHNYRYYVLSQPTIPDSVYDELFHELEKLEKKYPETITPSSPTQRVGAEPLKVFEPVHHEIPMLSLDNVFDEKGLRAFDKRIRQRLKLDKPFEYVCEPKMDGVALSLLYENGELIRAATRGDGYTGENVTQNTRTIASVPLQLRGNDYPELVEIRGEVLMPREGFAKFNREAEKRGDKTFANPRNAASGSLRQLDPRITAKRPLIFYGYLIGLLKGKDFPKNHCDVLKWFKDWGIPVISEIKVVGGIEGCLDYYEHLVKTREKMPFDIDGIVIKVNSLQVQAELGFVSRAPRWAIAYKFPAQEKMTVVKAIEFQVGRTGAVTPVARLEPVSVSGVTVSNATLHNFDELYRKDVRVGDTVIVRRAGDVIPEVVGPILAKRPKKAKLIKIPSRCPVCHAEVIKPEGEAVARCVGGLYCRAQLRESIKHFASRRALDIEGLGDKLVELFIQEKLIKDITGIYQLKKSAITALPRMGEKSAENLLTAIEKSKKTTLPRFLYALGIRGVGDTTARTLARHFHELDLLMKASIETLQEIRDIGPVAAENIHAFFHQKNNAELINKLIHLGVHWPQEKAVVKSEIAGKTFVLTGALKSLTREEAEEKIERSGGKATSSVSKNTDYVIVGENPGSKYEKAKALGISLIDEEAFLKLLKS</sequence>